<evidence type="ECO:0000255" key="1"/>
<evidence type="ECO:0000269" key="2">
    <source>
    </source>
</evidence>
<evidence type="ECO:0000269" key="3">
    <source>
    </source>
</evidence>
<evidence type="ECO:0000305" key="4"/>
<evidence type="ECO:0000305" key="5">
    <source>
    </source>
</evidence>
<organism>
    <name type="scientific">Arabidopsis thaliana</name>
    <name type="common">Mouse-ear cress</name>
    <dbReference type="NCBI Taxonomy" id="3702"/>
    <lineage>
        <taxon>Eukaryota</taxon>
        <taxon>Viridiplantae</taxon>
        <taxon>Streptophyta</taxon>
        <taxon>Embryophyta</taxon>
        <taxon>Tracheophyta</taxon>
        <taxon>Spermatophyta</taxon>
        <taxon>Magnoliopsida</taxon>
        <taxon>eudicotyledons</taxon>
        <taxon>Gunneridae</taxon>
        <taxon>Pentapetalae</taxon>
        <taxon>rosids</taxon>
        <taxon>malvids</taxon>
        <taxon>Brassicales</taxon>
        <taxon>Brassicaceae</taxon>
        <taxon>Camelineae</taxon>
        <taxon>Arabidopsis</taxon>
    </lineage>
</organism>
<reference key="1">
    <citation type="journal article" date="2000" name="Nature">
        <title>Sequence and analysis of chromosome 1 of the plant Arabidopsis thaliana.</title>
        <authorList>
            <person name="Theologis A."/>
            <person name="Ecker J.R."/>
            <person name="Palm C.J."/>
            <person name="Federspiel N.A."/>
            <person name="Kaul S."/>
            <person name="White O."/>
            <person name="Alonso J."/>
            <person name="Altafi H."/>
            <person name="Araujo R."/>
            <person name="Bowman C.L."/>
            <person name="Brooks S.Y."/>
            <person name="Buehler E."/>
            <person name="Chan A."/>
            <person name="Chao Q."/>
            <person name="Chen H."/>
            <person name="Cheuk R.F."/>
            <person name="Chin C.W."/>
            <person name="Chung M.K."/>
            <person name="Conn L."/>
            <person name="Conway A.B."/>
            <person name="Conway A.R."/>
            <person name="Creasy T.H."/>
            <person name="Dewar K."/>
            <person name="Dunn P."/>
            <person name="Etgu P."/>
            <person name="Feldblyum T.V."/>
            <person name="Feng J.-D."/>
            <person name="Fong B."/>
            <person name="Fujii C.Y."/>
            <person name="Gill J.E."/>
            <person name="Goldsmith A.D."/>
            <person name="Haas B."/>
            <person name="Hansen N.F."/>
            <person name="Hughes B."/>
            <person name="Huizar L."/>
            <person name="Hunter J.L."/>
            <person name="Jenkins J."/>
            <person name="Johnson-Hopson C."/>
            <person name="Khan S."/>
            <person name="Khaykin E."/>
            <person name="Kim C.J."/>
            <person name="Koo H.L."/>
            <person name="Kremenetskaia I."/>
            <person name="Kurtz D.B."/>
            <person name="Kwan A."/>
            <person name="Lam B."/>
            <person name="Langin-Hooper S."/>
            <person name="Lee A."/>
            <person name="Lee J.M."/>
            <person name="Lenz C.A."/>
            <person name="Li J.H."/>
            <person name="Li Y.-P."/>
            <person name="Lin X."/>
            <person name="Liu S.X."/>
            <person name="Liu Z.A."/>
            <person name="Luros J.S."/>
            <person name="Maiti R."/>
            <person name="Marziali A."/>
            <person name="Militscher J."/>
            <person name="Miranda M."/>
            <person name="Nguyen M."/>
            <person name="Nierman W.C."/>
            <person name="Osborne B.I."/>
            <person name="Pai G."/>
            <person name="Peterson J."/>
            <person name="Pham P.K."/>
            <person name="Rizzo M."/>
            <person name="Rooney T."/>
            <person name="Rowley D."/>
            <person name="Sakano H."/>
            <person name="Salzberg S.L."/>
            <person name="Schwartz J.R."/>
            <person name="Shinn P."/>
            <person name="Southwick A.M."/>
            <person name="Sun H."/>
            <person name="Tallon L.J."/>
            <person name="Tambunga G."/>
            <person name="Toriumi M.J."/>
            <person name="Town C.D."/>
            <person name="Utterback T."/>
            <person name="Van Aken S."/>
            <person name="Vaysberg M."/>
            <person name="Vysotskaia V.S."/>
            <person name="Walker M."/>
            <person name="Wu D."/>
            <person name="Yu G."/>
            <person name="Fraser C.M."/>
            <person name="Venter J.C."/>
            <person name="Davis R.W."/>
        </authorList>
    </citation>
    <scope>NUCLEOTIDE SEQUENCE [LARGE SCALE GENOMIC DNA]</scope>
    <source>
        <strain>cv. Columbia</strain>
    </source>
</reference>
<reference key="2">
    <citation type="journal article" date="2017" name="Plant J.">
        <title>Araport11: a complete reannotation of the Arabidopsis thaliana reference genome.</title>
        <authorList>
            <person name="Cheng C.Y."/>
            <person name="Krishnakumar V."/>
            <person name="Chan A.P."/>
            <person name="Thibaud-Nissen F."/>
            <person name="Schobel S."/>
            <person name="Town C.D."/>
        </authorList>
    </citation>
    <scope>GENOME REANNOTATION</scope>
    <source>
        <strain>cv. Columbia</strain>
    </source>
</reference>
<reference key="3">
    <citation type="journal article" date="2007" name="BMC Genomics">
        <title>Experimental validation of novel genes predicted in the un-annotated regions of the Arabidopsis genome.</title>
        <authorList>
            <person name="Moskal W.A. Jr."/>
            <person name="Wu H.C."/>
            <person name="Underwood B.A."/>
            <person name="Wang W."/>
            <person name="Town C.D."/>
            <person name="Xiao Y.-L."/>
        </authorList>
    </citation>
    <scope>NUCLEOTIDE SEQUENCE [LARGE SCALE MRNA]</scope>
    <source>
        <strain>cv. Columbia</strain>
    </source>
</reference>
<reference key="4">
    <citation type="journal article" date="2006" name="J. Biol. Chem.">
        <title>AtGAT1, a high affinity transporter for gamma-aminobutyric acid in Arabidopsis thaliana.</title>
        <authorList>
            <person name="Meyer A."/>
            <person name="Eskandari S."/>
            <person name="Grallath S."/>
            <person name="Rentsch D."/>
        </authorList>
    </citation>
    <scope>FUNCTION</scope>
    <scope>BIOPHYSICOCHEMICAL PROPERTIES</scope>
    <scope>SUBCELLULAR LOCATION</scope>
    <scope>TISSUE SPECIFICITY</scope>
    <scope>INDUCTION</scope>
</reference>
<reference key="5">
    <citation type="journal article" date="2009" name="Planta">
        <title>BAT1, a bidirectional amino acid transporter in Arabidopsis.</title>
        <authorList>
            <person name="Duendar E."/>
            <person name="Bush D.R."/>
        </authorList>
    </citation>
    <scope>FUNCTION</scope>
    <scope>TISSUE SPECIFICITY</scope>
</reference>
<sequence>MGGEERSGDGEKRGEEVVDAGSLFVLKSKGTWWHCGFHLTTSIVAPALLSLPYAFKFLGWAAGISCLVGGAAVTFYSYTLLSLTLEHHASLGNRYLRFRDMAHHILSPKWGRYYVGPIQMAVCYGVVIANALLGGQCLKAMYLVVQPNGEMKLFEFVIIFGCLLLVLAQFPSFHSLRYINSLSLLLCLLYSASAAAASIYIGKEPNAPEKDYTIVGDPETRVFGIFNAMAIIATTYGNGIIPEIQATISAPVKGKMMKGLCMCYLVVIMTFFTVAITGYWAFGKKANGLIFTNFLNAETNHYFVPTWFIFLVNLFTVLQLSAVAVVYLQPINDILESVISDPTKKEFSIRNVIPRLVVRSLFVVMATIVAAMLPFFGDVNSLLGAFGFIPLDFVLPVVFFNFTFKPSKKSFIFWINTVIAVVFSCLGVIAMVAAVRQIIIDANTYKLFADV</sequence>
<gene>
    <name type="primary">GAT1</name>
    <name type="synonym">BAT1</name>
    <name type="ordered locus">At1g08230</name>
    <name type="ORF">T23G18.9</name>
</gene>
<feature type="chain" id="PRO_0000418998" description="GABA transporter 1">
    <location>
        <begin position="1"/>
        <end position="451"/>
    </location>
</feature>
<feature type="transmembrane region" description="Helical" evidence="1">
    <location>
        <begin position="35"/>
        <end position="55"/>
    </location>
</feature>
<feature type="transmembrane region" description="Helical" evidence="1">
    <location>
        <begin position="57"/>
        <end position="77"/>
    </location>
</feature>
<feature type="transmembrane region" description="Helical" evidence="1">
    <location>
        <begin position="115"/>
        <end position="135"/>
    </location>
</feature>
<feature type="transmembrane region" description="Helical" evidence="1">
    <location>
        <begin position="153"/>
        <end position="173"/>
    </location>
</feature>
<feature type="transmembrane region" description="Helical" evidence="1">
    <location>
        <begin position="182"/>
        <end position="202"/>
    </location>
</feature>
<feature type="transmembrane region" description="Helical" evidence="1">
    <location>
        <begin position="222"/>
        <end position="242"/>
    </location>
</feature>
<feature type="transmembrane region" description="Helical" evidence="1">
    <location>
        <begin position="262"/>
        <end position="282"/>
    </location>
</feature>
<feature type="transmembrane region" description="Helical" evidence="1">
    <location>
        <begin position="308"/>
        <end position="328"/>
    </location>
</feature>
<feature type="transmembrane region" description="Helical" evidence="1">
    <location>
        <begin position="356"/>
        <end position="376"/>
    </location>
</feature>
<feature type="transmembrane region" description="Helical" evidence="1">
    <location>
        <begin position="382"/>
        <end position="402"/>
    </location>
</feature>
<feature type="transmembrane region" description="Helical" evidence="1">
    <location>
        <begin position="411"/>
        <end position="431"/>
    </location>
</feature>
<dbReference type="EMBL" id="AC011438">
    <property type="protein sequence ID" value="AAF18251.1"/>
    <property type="status" value="ALT_SEQ"/>
    <property type="molecule type" value="Genomic_DNA"/>
</dbReference>
<dbReference type="EMBL" id="CP002684">
    <property type="protein sequence ID" value="AEE28264.1"/>
    <property type="molecule type" value="Genomic_DNA"/>
</dbReference>
<dbReference type="EMBL" id="EF183286">
    <property type="status" value="NOT_ANNOTATED_CDS"/>
    <property type="molecule type" value="mRNA"/>
</dbReference>
<dbReference type="RefSeq" id="NP_001077487.1">
    <property type="nucleotide sequence ID" value="NM_001084018.3"/>
</dbReference>
<dbReference type="SMR" id="F4HW02"/>
<dbReference type="BioGRID" id="22585">
    <property type="interactions" value="7"/>
</dbReference>
<dbReference type="FunCoup" id="F4HW02">
    <property type="interactions" value="1"/>
</dbReference>
<dbReference type="IntAct" id="F4HW02">
    <property type="interactions" value="6"/>
</dbReference>
<dbReference type="STRING" id="3702.F4HW02"/>
<dbReference type="TCDB" id="2.A.18.2.13">
    <property type="family name" value="the amino acid/auxin permease (aaap) family"/>
</dbReference>
<dbReference type="PaxDb" id="3702-AT1G08230.2"/>
<dbReference type="ProteomicsDB" id="228899"/>
<dbReference type="EnsemblPlants" id="AT1G08230.2">
    <property type="protein sequence ID" value="AT1G08230.2"/>
    <property type="gene ID" value="AT1G08230"/>
</dbReference>
<dbReference type="GeneID" id="837344"/>
<dbReference type="Gramene" id="AT1G08230.2">
    <property type="protein sequence ID" value="AT1G08230.2"/>
    <property type="gene ID" value="AT1G08230"/>
</dbReference>
<dbReference type="KEGG" id="ath:AT1G08230"/>
<dbReference type="Araport" id="AT1G08230"/>
<dbReference type="TAIR" id="AT1G08230"/>
<dbReference type="eggNOG" id="KOG1303">
    <property type="taxonomic scope" value="Eukaryota"/>
</dbReference>
<dbReference type="HOGENOM" id="CLU_031160_1_0_1"/>
<dbReference type="InParanoid" id="F4HW02"/>
<dbReference type="OMA" id="CGYHLST"/>
<dbReference type="OrthoDB" id="40134at2759"/>
<dbReference type="PRO" id="PR:F4HW02"/>
<dbReference type="Proteomes" id="UP000006548">
    <property type="component" value="Chromosome 1"/>
</dbReference>
<dbReference type="ExpressionAtlas" id="F4HW02">
    <property type="expression patterns" value="baseline and differential"/>
</dbReference>
<dbReference type="GO" id="GO:0005886">
    <property type="term" value="C:plasma membrane"/>
    <property type="evidence" value="ECO:0000314"/>
    <property type="project" value="TAIR"/>
</dbReference>
<dbReference type="GO" id="GO:0015185">
    <property type="term" value="F:gamma-aminobutyric acid transmembrane transporter activity"/>
    <property type="evidence" value="ECO:0000314"/>
    <property type="project" value="TAIR"/>
</dbReference>
<dbReference type="GO" id="GO:0015812">
    <property type="term" value="P:gamma-aminobutyric acid transport"/>
    <property type="evidence" value="ECO:0000316"/>
    <property type="project" value="TAIR"/>
</dbReference>
<dbReference type="InterPro" id="IPR013057">
    <property type="entry name" value="AA_transpt_TM"/>
</dbReference>
<dbReference type="PANTHER" id="PTHR48017">
    <property type="entry name" value="OS05G0424000 PROTEIN-RELATED"/>
    <property type="match status" value="1"/>
</dbReference>
<dbReference type="Pfam" id="PF01490">
    <property type="entry name" value="Aa_trans"/>
    <property type="match status" value="1"/>
</dbReference>
<keyword id="KW-0029">Amino-acid transport</keyword>
<keyword id="KW-1003">Cell membrane</keyword>
<keyword id="KW-0472">Membrane</keyword>
<keyword id="KW-1185">Reference proteome</keyword>
<keyword id="KW-0812">Transmembrane</keyword>
<keyword id="KW-1133">Transmembrane helix</keyword>
<keyword id="KW-0813">Transport</keyword>
<name>GAT1_ARATH</name>
<proteinExistence type="evidence at protein level"/>
<protein>
    <recommendedName>
        <fullName>GABA transporter 1</fullName>
        <shortName>AtGAT1</shortName>
    </recommendedName>
    <alternativeName>
        <fullName>Bidirectional amino acid transporter 1</fullName>
    </alternativeName>
</protein>
<comment type="function">
    <text evidence="2 3">High affinity gamma-aminobutyric acid (GABA) transporter probably involved in GABA uptake into cells. When expressed in a heterologous system (Xenopus oocytes), imports GABA, butylamine, beta- and L-Alanine, 5-aminovaleric acid, 6-aminocaproic acid and 8-aminocaprylic acid, but does not mediate the transport of proline or glycine betaine.</text>
</comment>
<comment type="biophysicochemical properties">
    <kinetics>
        <KM evidence="2">10 uM for GABA</KM>
    </kinetics>
    <phDependence>
        <text evidence="2">Optimum pH is 4.5-5.5.</text>
    </phDependence>
</comment>
<comment type="subcellular location">
    <subcellularLocation>
        <location evidence="5">Cell membrane</location>
        <topology evidence="5">Multi-pass membrane protein</topology>
    </subcellularLocation>
    <text>Plasma membrane.</text>
</comment>
<comment type="tissue specificity">
    <text evidence="2 3">Highly expressed in flowers and at lower levels in roots, leaves and stems.</text>
</comment>
<comment type="induction">
    <text evidence="2">By wounding and senescence.</text>
</comment>
<comment type="similarity">
    <text evidence="4">Belongs to the amino acid/polyamine transporter 2 family. Amino acid/auxin permease (AAAP) (TC 2.A.18.2) subfamily.</text>
</comment>
<comment type="sequence caution" evidence="4">
    <conflict type="erroneous gene model prediction">
        <sequence resource="EMBL-CDS" id="AAF18251"/>
    </conflict>
</comment>
<comment type="sequence caution" evidence="4">
    <conflict type="frameshift">
        <sequence resource="EMBL" id="EF183286"/>
    </conflict>
</comment>
<accession>F4HW02</accession>
<accession>Q9SGD7</accession>